<reference key="1">
    <citation type="journal article" date="2001" name="Nature">
        <title>Genome sequence of enterohaemorrhagic Escherichia coli O157:H7.</title>
        <authorList>
            <person name="Perna N.T."/>
            <person name="Plunkett G. III"/>
            <person name="Burland V."/>
            <person name="Mau B."/>
            <person name="Glasner J.D."/>
            <person name="Rose D.J."/>
            <person name="Mayhew G.F."/>
            <person name="Evans P.S."/>
            <person name="Gregor J."/>
            <person name="Kirkpatrick H.A."/>
            <person name="Posfai G."/>
            <person name="Hackett J."/>
            <person name="Klink S."/>
            <person name="Boutin A."/>
            <person name="Shao Y."/>
            <person name="Miller L."/>
            <person name="Grotbeck E.J."/>
            <person name="Davis N.W."/>
            <person name="Lim A."/>
            <person name="Dimalanta E.T."/>
            <person name="Potamousis K."/>
            <person name="Apodaca J."/>
            <person name="Anantharaman T.S."/>
            <person name="Lin J."/>
            <person name="Yen G."/>
            <person name="Schwartz D.C."/>
            <person name="Welch R.A."/>
            <person name="Blattner F.R."/>
        </authorList>
    </citation>
    <scope>NUCLEOTIDE SEQUENCE [LARGE SCALE GENOMIC DNA]</scope>
    <source>
        <strain>O157:H7 / EDL933 / ATCC 700927 / EHEC</strain>
    </source>
</reference>
<reference key="2">
    <citation type="journal article" date="2001" name="DNA Res.">
        <title>Complete genome sequence of enterohemorrhagic Escherichia coli O157:H7 and genomic comparison with a laboratory strain K-12.</title>
        <authorList>
            <person name="Hayashi T."/>
            <person name="Makino K."/>
            <person name="Ohnishi M."/>
            <person name="Kurokawa K."/>
            <person name="Ishii K."/>
            <person name="Yokoyama K."/>
            <person name="Han C.-G."/>
            <person name="Ohtsubo E."/>
            <person name="Nakayama K."/>
            <person name="Murata T."/>
            <person name="Tanaka M."/>
            <person name="Tobe T."/>
            <person name="Iida T."/>
            <person name="Takami H."/>
            <person name="Honda T."/>
            <person name="Sasakawa C."/>
            <person name="Ogasawara N."/>
            <person name="Yasunaga T."/>
            <person name="Kuhara S."/>
            <person name="Shiba T."/>
            <person name="Hattori M."/>
            <person name="Shinagawa H."/>
        </authorList>
    </citation>
    <scope>NUCLEOTIDE SEQUENCE [LARGE SCALE GENOMIC DNA]</scope>
    <source>
        <strain>O157:H7 / Sakai / RIMD 0509952 / EHEC</strain>
    </source>
</reference>
<name>CHRR_ECO57</name>
<accession>P0AGE7</accession>
<accession>P31465</accession>
<sequence length="188" mass="20376">MSEKLQVVTLLGSLRKGSFNGMVARTLPKIAPASMEVNALPSIADIPLYDADVQQEEGFPATVEALAEQIRQADGVVIVTPEYNYSVPGGLKNAIDWLSRLPDQPLAGKPVLIQTSSMGVIGGARCQYHLRQILVFLDAMVMNKPEFMGGVIQNKVDPQTGEVIDQGTLDHLTGQLTAFGEFIQRVKI</sequence>
<comment type="function">
    <text evidence="1">Catalyzes the reduction of quinones. Acts by simultaneous two-electron transfer, avoiding formation of highly reactive semiquinone intermediates and producing quinols that promote tolerance of H(2)O(2). Quinone reduction is probably the primary biological role of ChrR. Can also reduce toxic chromate to insoluble and less toxic Cr(3+). Catalyzes the transfer of three electrons to Cr(6+) producing Cr(3+) and one electron to molecular oxygen without producing the toxic Cr(5+) species and only producing a minimal amount of reactive oxygen species (ROS). Chromate reduction protects the cell against chromate toxicity, but is likely a secondary activity.</text>
</comment>
<comment type="catalytic activity">
    <reaction evidence="1">
        <text>a quinone + NADH + H(+) = a quinol + NAD(+)</text>
        <dbReference type="Rhea" id="RHEA:46160"/>
        <dbReference type="ChEBI" id="CHEBI:15378"/>
        <dbReference type="ChEBI" id="CHEBI:24646"/>
        <dbReference type="ChEBI" id="CHEBI:57540"/>
        <dbReference type="ChEBI" id="CHEBI:57945"/>
        <dbReference type="ChEBI" id="CHEBI:132124"/>
        <dbReference type="EC" id="1.6.5.2"/>
    </reaction>
</comment>
<comment type="catalytic activity">
    <reaction evidence="1">
        <text>a quinone + NADPH + H(+) = a quinol + NADP(+)</text>
        <dbReference type="Rhea" id="RHEA:46164"/>
        <dbReference type="ChEBI" id="CHEBI:15378"/>
        <dbReference type="ChEBI" id="CHEBI:24646"/>
        <dbReference type="ChEBI" id="CHEBI:57783"/>
        <dbReference type="ChEBI" id="CHEBI:58349"/>
        <dbReference type="ChEBI" id="CHEBI:132124"/>
        <dbReference type="EC" id="1.6.5.2"/>
    </reaction>
</comment>
<comment type="catalytic activity">
    <reaction evidence="1">
        <text>Cr(6+) + 2 NADH + O2 = Cr(3+) + superoxide + 2 NAD(+) + 2 H(+)</text>
        <dbReference type="Rhea" id="RHEA:44372"/>
        <dbReference type="ChEBI" id="CHEBI:15378"/>
        <dbReference type="ChEBI" id="CHEBI:15379"/>
        <dbReference type="ChEBI" id="CHEBI:18421"/>
        <dbReference type="ChEBI" id="CHEBI:33007"/>
        <dbReference type="ChEBI" id="CHEBI:49544"/>
        <dbReference type="ChEBI" id="CHEBI:57540"/>
        <dbReference type="ChEBI" id="CHEBI:57945"/>
    </reaction>
</comment>
<comment type="catalytic activity">
    <reaction evidence="1">
        <text>Cr(6+) + 2 NADPH + O2 = Cr(3+) + superoxide + 2 NADP(+) + 2 H(+)</text>
        <dbReference type="Rhea" id="RHEA:44368"/>
        <dbReference type="ChEBI" id="CHEBI:15378"/>
        <dbReference type="ChEBI" id="CHEBI:15379"/>
        <dbReference type="ChEBI" id="CHEBI:18421"/>
        <dbReference type="ChEBI" id="CHEBI:33007"/>
        <dbReference type="ChEBI" id="CHEBI:49544"/>
        <dbReference type="ChEBI" id="CHEBI:57783"/>
        <dbReference type="ChEBI" id="CHEBI:58349"/>
    </reaction>
</comment>
<comment type="cofactor">
    <cofactor evidence="1">
        <name>FMN</name>
        <dbReference type="ChEBI" id="CHEBI:58210"/>
    </cofactor>
    <text evidence="1">Binds 1 FMN per subunit.</text>
</comment>
<comment type="subunit">
    <text evidence="1">Homotetramer. Dimer of dimers. The tetrameric configuration has a central role in chromate reductase activity.</text>
</comment>
<comment type="similarity">
    <text evidence="2">Belongs to the SsuE family.</text>
</comment>
<evidence type="ECO:0000250" key="1">
    <source>
        <dbReference type="UniProtKB" id="P0AGE6"/>
    </source>
</evidence>
<evidence type="ECO:0000305" key="2"/>
<keyword id="KW-0285">Flavoprotein</keyword>
<keyword id="KW-0288">FMN</keyword>
<keyword id="KW-0520">NAD</keyword>
<keyword id="KW-0560">Oxidoreductase</keyword>
<keyword id="KW-1185">Reference proteome</keyword>
<gene>
    <name type="primary">chrR</name>
    <name type="synonym">yieF</name>
    <name type="ordered locus">Z5208</name>
    <name type="ordered locus">ECs4650</name>
</gene>
<protein>
    <recommendedName>
        <fullName evidence="1">Quinone reductase</fullName>
        <ecNumber evidence="1">1.6.5.2</ecNumber>
    </recommendedName>
    <alternativeName>
        <fullName evidence="1">Chromate reductase</fullName>
        <shortName evidence="1">CHRR</shortName>
        <ecNumber evidence="1">1.6.-.-</ecNumber>
    </alternativeName>
    <alternativeName>
        <fullName evidence="1">NAD(P)H dehydrogenase (quinone)</fullName>
    </alternativeName>
</protein>
<feature type="chain" id="PRO_0000160597" description="Quinone reductase">
    <location>
        <begin position="1"/>
        <end position="188"/>
    </location>
</feature>
<feature type="binding site" evidence="1">
    <location>
        <begin position="13"/>
        <end position="20"/>
    </location>
    <ligand>
        <name>FMN</name>
        <dbReference type="ChEBI" id="CHEBI:58210"/>
    </ligand>
</feature>
<feature type="binding site" evidence="1">
    <location>
        <begin position="82"/>
        <end position="85"/>
    </location>
    <ligand>
        <name>FMN</name>
        <dbReference type="ChEBI" id="CHEBI:58210"/>
    </ligand>
</feature>
<feature type="binding site" evidence="1">
    <location>
        <position position="117"/>
    </location>
    <ligand>
        <name>FMN</name>
        <dbReference type="ChEBI" id="CHEBI:58210"/>
    </ligand>
</feature>
<proteinExistence type="inferred from homology"/>
<organism>
    <name type="scientific">Escherichia coli O157:H7</name>
    <dbReference type="NCBI Taxonomy" id="83334"/>
    <lineage>
        <taxon>Bacteria</taxon>
        <taxon>Pseudomonadati</taxon>
        <taxon>Pseudomonadota</taxon>
        <taxon>Gammaproteobacteria</taxon>
        <taxon>Enterobacterales</taxon>
        <taxon>Enterobacteriaceae</taxon>
        <taxon>Escherichia</taxon>
    </lineage>
</organism>
<dbReference type="EC" id="1.6.5.2" evidence="1"/>
<dbReference type="EC" id="1.6.-.-" evidence="1"/>
<dbReference type="EMBL" id="AE005174">
    <property type="protein sequence ID" value="AAG58913.1"/>
    <property type="molecule type" value="Genomic_DNA"/>
</dbReference>
<dbReference type="EMBL" id="BA000007">
    <property type="protein sequence ID" value="BAB38073.1"/>
    <property type="molecule type" value="Genomic_DNA"/>
</dbReference>
<dbReference type="PIR" id="B91210">
    <property type="entry name" value="B91210"/>
</dbReference>
<dbReference type="PIR" id="E86056">
    <property type="entry name" value="E86056"/>
</dbReference>
<dbReference type="RefSeq" id="NP_312677.1">
    <property type="nucleotide sequence ID" value="NC_002695.1"/>
</dbReference>
<dbReference type="RefSeq" id="WP_001291268.1">
    <property type="nucleotide sequence ID" value="NZ_VOAI01000011.1"/>
</dbReference>
<dbReference type="SMR" id="P0AGE7"/>
<dbReference type="STRING" id="155864.Z5208"/>
<dbReference type="GeneID" id="75173932"/>
<dbReference type="GeneID" id="915385"/>
<dbReference type="KEGG" id="ece:Z5208"/>
<dbReference type="KEGG" id="ecs:ECs_4650"/>
<dbReference type="PATRIC" id="fig|386585.9.peg.4859"/>
<dbReference type="eggNOG" id="COG0431">
    <property type="taxonomic scope" value="Bacteria"/>
</dbReference>
<dbReference type="HOGENOM" id="CLU_055322_4_2_6"/>
<dbReference type="OMA" id="YGGVWAQ"/>
<dbReference type="Proteomes" id="UP000000558">
    <property type="component" value="Chromosome"/>
</dbReference>
<dbReference type="Proteomes" id="UP000002519">
    <property type="component" value="Chromosome"/>
</dbReference>
<dbReference type="GO" id="GO:0005829">
    <property type="term" value="C:cytosol"/>
    <property type="evidence" value="ECO:0007669"/>
    <property type="project" value="TreeGrafter"/>
</dbReference>
<dbReference type="GO" id="GO:0010181">
    <property type="term" value="F:FMN binding"/>
    <property type="evidence" value="ECO:0007669"/>
    <property type="project" value="TreeGrafter"/>
</dbReference>
<dbReference type="GO" id="GO:0050136">
    <property type="term" value="F:NADH:ubiquinone reductase (non-electrogenic) activity"/>
    <property type="evidence" value="ECO:0007669"/>
    <property type="project" value="RHEA"/>
</dbReference>
<dbReference type="GO" id="GO:0008753">
    <property type="term" value="F:NADPH dehydrogenase (quinone) activity"/>
    <property type="evidence" value="ECO:0007669"/>
    <property type="project" value="RHEA"/>
</dbReference>
<dbReference type="FunFam" id="3.40.50.360:FF:000014">
    <property type="entry name" value="NADPH-dependent FMN reductase"/>
    <property type="match status" value="1"/>
</dbReference>
<dbReference type="Gene3D" id="3.40.50.360">
    <property type="match status" value="1"/>
</dbReference>
<dbReference type="InterPro" id="IPR029039">
    <property type="entry name" value="Flavoprotein-like_sf"/>
</dbReference>
<dbReference type="InterPro" id="IPR005025">
    <property type="entry name" value="FMN_Rdtase-like_dom"/>
</dbReference>
<dbReference type="InterPro" id="IPR050712">
    <property type="entry name" value="NAD(P)H-dep_reductase"/>
</dbReference>
<dbReference type="PANTHER" id="PTHR30543">
    <property type="entry name" value="CHROMATE REDUCTASE"/>
    <property type="match status" value="1"/>
</dbReference>
<dbReference type="PANTHER" id="PTHR30543:SF21">
    <property type="entry name" value="NAD(P)H-DEPENDENT FMN REDUCTASE LOT6"/>
    <property type="match status" value="1"/>
</dbReference>
<dbReference type="Pfam" id="PF03358">
    <property type="entry name" value="FMN_red"/>
    <property type="match status" value="1"/>
</dbReference>
<dbReference type="SUPFAM" id="SSF52218">
    <property type="entry name" value="Flavoproteins"/>
    <property type="match status" value="1"/>
</dbReference>